<protein>
    <recommendedName>
        <fullName>Trypsin inhibitor 2</fullName>
    </recommendedName>
    <alternativeName>
        <fullName>BDTI-II</fullName>
    </alternativeName>
    <alternativeName>
        <fullName>Trypsin inhibitor II</fullName>
    </alternativeName>
</protein>
<proteinExistence type="evidence at protein level"/>
<reference key="1">
    <citation type="journal article" date="1987" name="Biol. Chem. Hoppe-Seyler">
        <title>Amino-acid sequences of trypsin inhibitors from watermelon (Citrullus vulgaris) and red bryony (Bryonia dioica) seeds.</title>
        <authorList>
            <person name="Otlewski J."/>
            <person name="Whatley H."/>
            <person name="Polanowski A."/>
            <person name="Wilusz T."/>
        </authorList>
    </citation>
    <scope>PROTEIN SEQUENCE</scope>
    <source>
        <tissue>Seed</tissue>
    </source>
</reference>
<dbReference type="PIR" id="S00177">
    <property type="entry name" value="TIPU2B"/>
</dbReference>
<dbReference type="SMR" id="P11968"/>
<dbReference type="MEROPS" id="I07.016"/>
<dbReference type="GO" id="GO:0005576">
    <property type="term" value="C:extracellular region"/>
    <property type="evidence" value="ECO:0007669"/>
    <property type="project" value="UniProtKB-SubCell"/>
</dbReference>
<dbReference type="GO" id="GO:0004867">
    <property type="term" value="F:serine-type endopeptidase inhibitor activity"/>
    <property type="evidence" value="ECO:0007669"/>
    <property type="project" value="UniProtKB-KW"/>
</dbReference>
<dbReference type="CDD" id="cd00150">
    <property type="entry name" value="PlantTI"/>
    <property type="match status" value="1"/>
</dbReference>
<dbReference type="Gene3D" id="4.10.75.20">
    <property type="match status" value="1"/>
</dbReference>
<dbReference type="InterPro" id="IPR000737">
    <property type="entry name" value="Prot_inh_squash"/>
</dbReference>
<dbReference type="InterPro" id="IPR011052">
    <property type="entry name" value="Proteinase_amylase_inhib_sf"/>
</dbReference>
<dbReference type="Pfam" id="PF00299">
    <property type="entry name" value="Squash"/>
    <property type="match status" value="1"/>
</dbReference>
<dbReference type="PRINTS" id="PR00293">
    <property type="entry name" value="SQUASHINHBTR"/>
</dbReference>
<dbReference type="SMART" id="SM00286">
    <property type="entry name" value="PTI"/>
    <property type="match status" value="1"/>
</dbReference>
<dbReference type="SUPFAM" id="SSF57027">
    <property type="entry name" value="Plant inhibitors of proteinases and amylases"/>
    <property type="match status" value="1"/>
</dbReference>
<dbReference type="PROSITE" id="PS00286">
    <property type="entry name" value="SQUASH_INHIBITOR"/>
    <property type="match status" value="1"/>
</dbReference>
<comment type="function">
    <text>Inhibits trypsin.</text>
</comment>
<comment type="subcellular location">
    <subcellularLocation>
        <location>Secreted</location>
    </subcellularLocation>
</comment>
<comment type="domain">
    <text evidence="1">The presence of a 'disulfide through disulfide knot' structurally defines this protein as a knottin.</text>
</comment>
<comment type="similarity">
    <text evidence="2">Belongs to the protease inhibitor I7 (squash-type serine protease inhibitor) family.</text>
</comment>
<sequence length="29" mass="3207">RGCPRILMRCKRDSDCLAGCVCQKNGYCG</sequence>
<keyword id="KW-0903">Direct protein sequencing</keyword>
<keyword id="KW-1015">Disulfide bond</keyword>
<keyword id="KW-0960">Knottin</keyword>
<keyword id="KW-0646">Protease inhibitor</keyword>
<keyword id="KW-0964">Secreted</keyword>
<keyword id="KW-0722">Serine protease inhibitor</keyword>
<feature type="peptide" id="PRO_0000044374" description="Trypsin inhibitor 2">
    <location>
        <begin position="1"/>
        <end position="29"/>
    </location>
</feature>
<feature type="site" description="Reactive bond">
    <location>
        <begin position="5"/>
        <end position="6"/>
    </location>
</feature>
<feature type="disulfide bond" evidence="1">
    <location>
        <begin position="3"/>
        <end position="20"/>
    </location>
</feature>
<feature type="disulfide bond" evidence="1">
    <location>
        <begin position="10"/>
        <end position="22"/>
    </location>
</feature>
<feature type="disulfide bond" evidence="1">
    <location>
        <begin position="16"/>
        <end position="28"/>
    </location>
</feature>
<organism>
    <name type="scientific">Bryonia dioica</name>
    <name type="common">Red bryony</name>
    <name type="synonym">Bryonia cretica subsp. dioica</name>
    <dbReference type="NCBI Taxonomy" id="3652"/>
    <lineage>
        <taxon>Eukaryota</taxon>
        <taxon>Viridiplantae</taxon>
        <taxon>Streptophyta</taxon>
        <taxon>Embryophyta</taxon>
        <taxon>Tracheophyta</taxon>
        <taxon>Spermatophyta</taxon>
        <taxon>Magnoliopsida</taxon>
        <taxon>eudicotyledons</taxon>
        <taxon>Gunneridae</taxon>
        <taxon>Pentapetalae</taxon>
        <taxon>rosids</taxon>
        <taxon>fabids</taxon>
        <taxon>Cucurbitales</taxon>
        <taxon>Cucurbitaceae</taxon>
        <taxon>Bryonieae</taxon>
        <taxon>Bryonia</taxon>
    </lineage>
</organism>
<accession>P11968</accession>
<name>ITR2_BRYDI</name>
<evidence type="ECO:0000250" key="1"/>
<evidence type="ECO:0000305" key="2"/>